<dbReference type="EMBL" id="AY341872">
    <property type="protein sequence ID" value="AAQ24157.1"/>
    <property type="molecule type" value="mRNA"/>
</dbReference>
<dbReference type="EMBL" id="AY341878">
    <property type="protein sequence ID" value="AAQ24162.1"/>
    <property type="molecule type" value="mRNA"/>
</dbReference>
<dbReference type="EMBL" id="AK011451">
    <property type="protein sequence ID" value="BAB27626.1"/>
    <property type="molecule type" value="mRNA"/>
</dbReference>
<dbReference type="EMBL" id="AK138358">
    <property type="protein sequence ID" value="BAE23631.1"/>
    <property type="molecule type" value="mRNA"/>
</dbReference>
<dbReference type="EMBL" id="BC058517">
    <property type="protein sequence ID" value="AAH58517.1"/>
    <property type="molecule type" value="mRNA"/>
</dbReference>
<dbReference type="CCDS" id="CCDS25550.1">
    <molecule id="Q3UUJ4-3"/>
</dbReference>
<dbReference type="CCDS" id="CCDS56816.1">
    <molecule id="Q3UUJ4-1"/>
</dbReference>
<dbReference type="RefSeq" id="NP_001239377.1">
    <molecule id="Q3UUJ4-1"/>
    <property type="nucleotide sequence ID" value="NM_001252448.2"/>
</dbReference>
<dbReference type="RefSeq" id="NP_001239378.1">
    <molecule id="Q3UUJ4-2"/>
    <property type="nucleotide sequence ID" value="NM_001252449.2"/>
</dbReference>
<dbReference type="RefSeq" id="NP_082402.1">
    <molecule id="Q3UUJ4-3"/>
    <property type="nucleotide sequence ID" value="NM_028126.4"/>
</dbReference>
<dbReference type="RefSeq" id="XP_006534358.1">
    <molecule id="Q3UUJ4-3"/>
    <property type="nucleotide sequence ID" value="XM_006534295.3"/>
</dbReference>
<dbReference type="RefSeq" id="XP_011247572.1">
    <molecule id="Q3UUJ4-1"/>
    <property type="nucleotide sequence ID" value="XM_011249270.1"/>
</dbReference>
<dbReference type="SMR" id="Q3UUJ4"/>
<dbReference type="BioGRID" id="215185">
    <property type="interactions" value="1"/>
</dbReference>
<dbReference type="FunCoup" id="Q3UUJ4">
    <property type="interactions" value="3219"/>
</dbReference>
<dbReference type="IntAct" id="Q3UUJ4">
    <property type="interactions" value="1"/>
</dbReference>
<dbReference type="STRING" id="10090.ENSMUSP00000007444"/>
<dbReference type="GlyGen" id="Q3UUJ4">
    <property type="glycosylation" value="2 sites, 2 N-linked glycans (2 sites)"/>
</dbReference>
<dbReference type="iPTMnet" id="Q3UUJ4"/>
<dbReference type="PhosphoSitePlus" id="Q3UUJ4"/>
<dbReference type="SwissPalm" id="Q3UUJ4"/>
<dbReference type="PaxDb" id="10090-ENSMUSP00000099361"/>
<dbReference type="PeptideAtlas" id="Q3UUJ4"/>
<dbReference type="ProteomicsDB" id="254596">
    <molecule id="Q3UUJ4-1"/>
</dbReference>
<dbReference type="ProteomicsDB" id="254597">
    <molecule id="Q3UUJ4-2"/>
</dbReference>
<dbReference type="ProteomicsDB" id="254598">
    <molecule id="Q3UUJ4-3"/>
</dbReference>
<dbReference type="Pumba" id="Q3UUJ4"/>
<dbReference type="Antibodypedia" id="64277">
    <property type="antibodies" value="350 antibodies from 31 providers"/>
</dbReference>
<dbReference type="DNASU" id="72149"/>
<dbReference type="Ensembl" id="ENSMUST00000007444.14">
    <molecule id="Q3UUJ4-1"/>
    <property type="protein sequence ID" value="ENSMUSP00000007444.8"/>
    <property type="gene ID" value="ENSMUSG00000069631.15"/>
</dbReference>
<dbReference type="Ensembl" id="ENSMUST00000103072.10">
    <molecule id="Q3UUJ4-3"/>
    <property type="protein sequence ID" value="ENSMUSP00000099361.4"/>
    <property type="gene ID" value="ENSMUSG00000069631.15"/>
</dbReference>
<dbReference type="GeneID" id="72149"/>
<dbReference type="KEGG" id="mmu:72149"/>
<dbReference type="UCSC" id="uc007lyf.2">
    <molecule id="Q3UUJ4-3"/>
    <property type="organism name" value="mouse"/>
</dbReference>
<dbReference type="UCSC" id="uc007lyg.2">
    <molecule id="Q3UUJ4-1"/>
    <property type="organism name" value="mouse"/>
</dbReference>
<dbReference type="UCSC" id="uc011ygi.2">
    <molecule id="Q3UUJ4-2"/>
    <property type="organism name" value="mouse"/>
</dbReference>
<dbReference type="AGR" id="MGI:1919399"/>
<dbReference type="CTD" id="92335"/>
<dbReference type="MGI" id="MGI:1919399">
    <property type="gene designation" value="Strada"/>
</dbReference>
<dbReference type="VEuPathDB" id="HostDB:ENSMUSG00000069631"/>
<dbReference type="eggNOG" id="KOG0582">
    <property type="taxonomic scope" value="Eukaryota"/>
</dbReference>
<dbReference type="GeneTree" id="ENSGT00940000158827"/>
<dbReference type="HOGENOM" id="CLU_000288_63_23_1"/>
<dbReference type="InParanoid" id="Q3UUJ4"/>
<dbReference type="OMA" id="INGVMPF"/>
<dbReference type="OrthoDB" id="840771at2759"/>
<dbReference type="PhylomeDB" id="Q3UUJ4"/>
<dbReference type="TreeFam" id="TF319817"/>
<dbReference type="Reactome" id="R-MMU-380972">
    <property type="pathway name" value="Energy dependent regulation of mTOR by LKB1-AMPK"/>
</dbReference>
<dbReference type="BioGRID-ORCS" id="72149">
    <property type="hits" value="9 hits in 82 CRISPR screens"/>
</dbReference>
<dbReference type="ChiTaRS" id="Strada">
    <property type="organism name" value="mouse"/>
</dbReference>
<dbReference type="PRO" id="PR:Q3UUJ4"/>
<dbReference type="Proteomes" id="UP000000589">
    <property type="component" value="Chromosome 11"/>
</dbReference>
<dbReference type="RNAct" id="Q3UUJ4">
    <property type="molecule type" value="protein"/>
</dbReference>
<dbReference type="Bgee" id="ENSMUSG00000069631">
    <property type="expression patterns" value="Expressed in spermatocyte and 186 other cell types or tissues"/>
</dbReference>
<dbReference type="ExpressionAtlas" id="Q3UUJ4">
    <property type="expression patterns" value="baseline and differential"/>
</dbReference>
<dbReference type="GO" id="GO:0005737">
    <property type="term" value="C:cytoplasm"/>
    <property type="evidence" value="ECO:0000250"/>
    <property type="project" value="UniProtKB"/>
</dbReference>
<dbReference type="GO" id="GO:0005829">
    <property type="term" value="C:cytosol"/>
    <property type="evidence" value="ECO:0007669"/>
    <property type="project" value="Ensembl"/>
</dbReference>
<dbReference type="GO" id="GO:0140535">
    <property type="term" value="C:intracellular protein-containing complex"/>
    <property type="evidence" value="ECO:0007669"/>
    <property type="project" value="Ensembl"/>
</dbReference>
<dbReference type="GO" id="GO:0005654">
    <property type="term" value="C:nucleoplasm"/>
    <property type="evidence" value="ECO:0007669"/>
    <property type="project" value="Ensembl"/>
</dbReference>
<dbReference type="GO" id="GO:0005634">
    <property type="term" value="C:nucleus"/>
    <property type="evidence" value="ECO:0000250"/>
    <property type="project" value="UniProtKB"/>
</dbReference>
<dbReference type="GO" id="GO:1902554">
    <property type="term" value="C:serine/threonine protein kinase complex"/>
    <property type="evidence" value="ECO:0007669"/>
    <property type="project" value="Ensembl"/>
</dbReference>
<dbReference type="GO" id="GO:0005524">
    <property type="term" value="F:ATP binding"/>
    <property type="evidence" value="ECO:0007669"/>
    <property type="project" value="InterPro"/>
</dbReference>
<dbReference type="GO" id="GO:0019900">
    <property type="term" value="F:kinase binding"/>
    <property type="evidence" value="ECO:0007669"/>
    <property type="project" value="Ensembl"/>
</dbReference>
<dbReference type="GO" id="GO:0030295">
    <property type="term" value="F:protein kinase activator activity"/>
    <property type="evidence" value="ECO:0000250"/>
    <property type="project" value="UniProtKB"/>
</dbReference>
<dbReference type="GO" id="GO:0004672">
    <property type="term" value="F:protein kinase activity"/>
    <property type="evidence" value="ECO:0007669"/>
    <property type="project" value="InterPro"/>
</dbReference>
<dbReference type="GO" id="GO:0043539">
    <property type="term" value="F:protein serine/threonine kinase activator activity"/>
    <property type="evidence" value="ECO:0007669"/>
    <property type="project" value="Ensembl"/>
</dbReference>
<dbReference type="GO" id="GO:0032147">
    <property type="term" value="P:activation of protein kinase activity"/>
    <property type="evidence" value="ECO:0000250"/>
    <property type="project" value="UniProtKB"/>
</dbReference>
<dbReference type="GO" id="GO:0070314">
    <property type="term" value="P:G1 to G0 transition"/>
    <property type="evidence" value="ECO:0007669"/>
    <property type="project" value="Ensembl"/>
</dbReference>
<dbReference type="GO" id="GO:0006611">
    <property type="term" value="P:protein export from nucleus"/>
    <property type="evidence" value="ECO:0000250"/>
    <property type="project" value="UniProtKB"/>
</dbReference>
<dbReference type="CDD" id="cd08227">
    <property type="entry name" value="PK_STRAD_alpha"/>
    <property type="match status" value="1"/>
</dbReference>
<dbReference type="FunFam" id="3.30.200.20:FF:000130">
    <property type="entry name" value="STE20-related kinase adapter protein alpha"/>
    <property type="match status" value="1"/>
</dbReference>
<dbReference type="FunFam" id="1.10.510.10:FF:000213">
    <property type="entry name" value="STE20-related kinase adapter protein alpha isoform X2"/>
    <property type="match status" value="1"/>
</dbReference>
<dbReference type="Gene3D" id="3.30.200.20">
    <property type="entry name" value="Phosphorylase Kinase, domain 1"/>
    <property type="match status" value="1"/>
</dbReference>
<dbReference type="Gene3D" id="1.10.510.10">
    <property type="entry name" value="Transferase(Phosphotransferase) domain 1"/>
    <property type="match status" value="1"/>
</dbReference>
<dbReference type="InterPro" id="IPR011009">
    <property type="entry name" value="Kinase-like_dom_sf"/>
</dbReference>
<dbReference type="InterPro" id="IPR000719">
    <property type="entry name" value="Prot_kinase_dom"/>
</dbReference>
<dbReference type="InterPro" id="IPR047173">
    <property type="entry name" value="STRAD_A/B-like"/>
</dbReference>
<dbReference type="PANTHER" id="PTHR48014">
    <property type="entry name" value="SERINE/THREONINE-PROTEIN KINASE FRAY2"/>
    <property type="match status" value="1"/>
</dbReference>
<dbReference type="PANTHER" id="PTHR48014:SF20">
    <property type="entry name" value="STE20-RELATED KINASE ADAPTER PROTEIN ALPHA"/>
    <property type="match status" value="1"/>
</dbReference>
<dbReference type="Pfam" id="PF00069">
    <property type="entry name" value="Pkinase"/>
    <property type="match status" value="1"/>
</dbReference>
<dbReference type="SUPFAM" id="SSF56112">
    <property type="entry name" value="Protein kinase-like (PK-like)"/>
    <property type="match status" value="1"/>
</dbReference>
<dbReference type="PROSITE" id="PS50011">
    <property type="entry name" value="PROTEIN_KINASE_DOM"/>
    <property type="match status" value="1"/>
</dbReference>
<feature type="chain" id="PRO_0000260037" description="STE20-related kinase adapter protein alpha">
    <location>
        <begin position="1"/>
        <end position="431"/>
    </location>
</feature>
<feature type="domain" description="Protein kinase" evidence="4">
    <location>
        <begin position="69"/>
        <end position="379"/>
    </location>
</feature>
<feature type="region of interest" description="Disordered" evidence="5">
    <location>
        <begin position="32"/>
        <end position="52"/>
    </location>
</feature>
<feature type="region of interest" description="Disordered" evidence="5">
    <location>
        <begin position="314"/>
        <end position="344"/>
    </location>
</feature>
<feature type="modified residue" description="Phosphoserine" evidence="2">
    <location>
        <position position="2"/>
    </location>
</feature>
<feature type="modified residue" description="Phosphoserine" evidence="2">
    <location>
        <position position="46"/>
    </location>
</feature>
<feature type="modified residue" description="Phosphothreonine; by LKB1" evidence="2">
    <location>
        <position position="419"/>
    </location>
</feature>
<feature type="splice variant" id="VSP_052217" description="In isoform 2 and isoform 3." evidence="9 10 11">
    <location>
        <begin position="5"/>
        <end position="41"/>
    </location>
</feature>
<feature type="splice variant" id="VSP_052218" description="In isoform 2." evidence="11">
    <location>
        <begin position="370"/>
        <end position="381"/>
    </location>
</feature>
<accession>Q3UUJ4</accession>
<accession>Q6VEU7</accession>
<accession>Q9D0G8</accession>
<protein>
    <recommendedName>
        <fullName>STE20-related kinase adapter protein alpha</fullName>
        <shortName>STRAD alpha</shortName>
    </recommendedName>
    <alternativeName>
        <fullName>STE20-related adapter protein</fullName>
    </alternativeName>
</protein>
<keyword id="KW-0025">Alternative splicing</keyword>
<keyword id="KW-0131">Cell cycle</keyword>
<keyword id="KW-0963">Cytoplasm</keyword>
<keyword id="KW-0539">Nucleus</keyword>
<keyword id="KW-0597">Phosphoprotein</keyword>
<keyword id="KW-1185">Reference proteome</keyword>
<name>STRAA_MOUSE</name>
<organism>
    <name type="scientific">Mus musculus</name>
    <name type="common">Mouse</name>
    <dbReference type="NCBI Taxonomy" id="10090"/>
    <lineage>
        <taxon>Eukaryota</taxon>
        <taxon>Metazoa</taxon>
        <taxon>Chordata</taxon>
        <taxon>Craniata</taxon>
        <taxon>Vertebrata</taxon>
        <taxon>Euteleostomi</taxon>
        <taxon>Mammalia</taxon>
        <taxon>Eutheria</taxon>
        <taxon>Euarchontoglires</taxon>
        <taxon>Glires</taxon>
        <taxon>Rodentia</taxon>
        <taxon>Myomorpha</taxon>
        <taxon>Muroidea</taxon>
        <taxon>Muridae</taxon>
        <taxon>Murinae</taxon>
        <taxon>Mus</taxon>
        <taxon>Mus</taxon>
    </lineage>
</organism>
<comment type="function">
    <text evidence="1">Pseudokinase which, in complex with CAB39/MO25 (CAB39/MO25alpha or CAB39L/MO25beta), binds to and activates STK11/LKB1. Adopts a closed conformation typical of active protein kinases and binds STK11/LKB1 as a pseudosubstrate, promoting conformational change of STK11/LKB1 in an active conformation (By similarity).</text>
</comment>
<comment type="subunit">
    <text evidence="1">Component of a trimeric complex composed of STK11/LKB1, STRAD (STRADA or STRADB) and CAB39/MO25 (CAB39/MO25alpha or CAB39L/MO25beta): the complex tethers STK11/LKB1 in the cytoplasm and stimulates its catalytic activity.</text>
</comment>
<comment type="subcellular location">
    <subcellularLocation>
        <location evidence="1">Nucleus</location>
    </subcellularLocation>
    <subcellularLocation>
        <location evidence="2">Cytoplasm</location>
    </subcellularLocation>
</comment>
<comment type="alternative products">
    <event type="alternative splicing"/>
    <isoform>
        <id>Q3UUJ4-1</id>
        <name evidence="7">1</name>
        <sequence type="displayed"/>
    </isoform>
    <isoform>
        <id>Q3UUJ4-2</id>
        <name evidence="8">2</name>
        <sequence type="described" ref="VSP_052217 VSP_052218"/>
    </isoform>
    <isoform>
        <id>Q3UUJ4-3</id>
        <name evidence="6 8">3</name>
        <sequence type="described" ref="VSP_052217"/>
    </isoform>
</comment>
<comment type="domain">
    <text evidence="3">The protein kinase domain is predicted to be catalytically inactive.</text>
</comment>
<comment type="similarity">
    <text evidence="12">Belongs to the protein kinase superfamily. STE Ser/Thr protein kinase family. STE20 subfamily.</text>
</comment>
<evidence type="ECO:0000250" key="1"/>
<evidence type="ECO:0000250" key="2">
    <source>
        <dbReference type="UniProtKB" id="Q7RTN6"/>
    </source>
</evidence>
<evidence type="ECO:0000255" key="3"/>
<evidence type="ECO:0000255" key="4">
    <source>
        <dbReference type="PROSITE-ProRule" id="PRU00159"/>
    </source>
</evidence>
<evidence type="ECO:0000256" key="5">
    <source>
        <dbReference type="SAM" id="MobiDB-lite"/>
    </source>
</evidence>
<evidence type="ECO:0000269" key="6">
    <source>
    </source>
</evidence>
<evidence type="ECO:0000269" key="7">
    <source>
    </source>
</evidence>
<evidence type="ECO:0000269" key="8">
    <source ref="1"/>
</evidence>
<evidence type="ECO:0000303" key="9">
    <source>
    </source>
</evidence>
<evidence type="ECO:0000303" key="10">
    <source>
    </source>
</evidence>
<evidence type="ECO:0000303" key="11">
    <source ref="1"/>
</evidence>
<evidence type="ECO:0000305" key="12"/>
<evidence type="ECO:0000312" key="13">
    <source>
        <dbReference type="EMBL" id="AAH58517.1"/>
    </source>
</evidence>
<evidence type="ECO:0000312" key="14">
    <source>
        <dbReference type="EMBL" id="AAQ24162.1"/>
    </source>
</evidence>
<evidence type="ECO:0000312" key="15">
    <source>
        <dbReference type="EMBL" id="BAB27626.1"/>
    </source>
</evidence>
<evidence type="ECO:0000312" key="16">
    <source>
        <dbReference type="EMBL" id="BAE23631.1"/>
    </source>
</evidence>
<sequence>MSFLVSKPERIRRWVSEKFIVEGLRDLELFGEQPPGDTRRKANEASSESIASFSKPEMMSSFLPEGGCYELLTIIGKGFEDLMTVNLARYKPTGEYVTVRRINLEACSNEMVTFLQGELHVSKLFSHPNIVPYRATFIADNELWVVTSFMAYGSAKDLIGTHFMDGMNELAIAYILQGVLKALDYIHHMGYVHRSVKASHILISTDGKVYLSGLRSNLSMISHGQRQRAVHDFPKYSIKVLPWLSPEVLQQNLQGYDAKSDIYSVGITACELANGHVPFKDMPATQMLLEKLNGTVPCLLDTSTIPAEELTMSPSRSIANPGLNDSLAAGSLRPSNGDSPSHPYHRTFSPHFHNFVEQCLQRNPDARPNASTLLNHSFFKQIKRRASEALPELLRPVTPITNFEGSQSQDHSGIFGLVTNLEDLEVDDWEF</sequence>
<gene>
    <name type="primary">Strada</name>
    <name type="synonym">Lyk5</name>
    <name type="synonym">Strad</name>
</gene>
<reference evidence="12 14" key="1">
    <citation type="submission" date="2003-07" db="EMBL/GenBank/DDBJ databases">
        <title>Cloning of mouse protein kinase LYK5.</title>
        <authorList>
            <person name="Zhou G."/>
            <person name="Wang J."/>
            <person name="Zhang Y."/>
        </authorList>
    </citation>
    <scope>NUCLEOTIDE SEQUENCE [MRNA] (ISOFORMS 2 AND 3)</scope>
    <source>
        <strain evidence="14">C57BL/6J</strain>
    </source>
</reference>
<reference evidence="12 16" key="2">
    <citation type="journal article" date="2005" name="Science">
        <title>The transcriptional landscape of the mammalian genome.</title>
        <authorList>
            <person name="Carninci P."/>
            <person name="Kasukawa T."/>
            <person name="Katayama S."/>
            <person name="Gough J."/>
            <person name="Frith M.C."/>
            <person name="Maeda N."/>
            <person name="Oyama R."/>
            <person name="Ravasi T."/>
            <person name="Lenhard B."/>
            <person name="Wells C."/>
            <person name="Kodzius R."/>
            <person name="Shimokawa K."/>
            <person name="Bajic V.B."/>
            <person name="Brenner S.E."/>
            <person name="Batalov S."/>
            <person name="Forrest A.R."/>
            <person name="Zavolan M."/>
            <person name="Davis M.J."/>
            <person name="Wilming L.G."/>
            <person name="Aidinis V."/>
            <person name="Allen J.E."/>
            <person name="Ambesi-Impiombato A."/>
            <person name="Apweiler R."/>
            <person name="Aturaliya R.N."/>
            <person name="Bailey T.L."/>
            <person name="Bansal M."/>
            <person name="Baxter L."/>
            <person name="Beisel K.W."/>
            <person name="Bersano T."/>
            <person name="Bono H."/>
            <person name="Chalk A.M."/>
            <person name="Chiu K.P."/>
            <person name="Choudhary V."/>
            <person name="Christoffels A."/>
            <person name="Clutterbuck D.R."/>
            <person name="Crowe M.L."/>
            <person name="Dalla E."/>
            <person name="Dalrymple B.P."/>
            <person name="de Bono B."/>
            <person name="Della Gatta G."/>
            <person name="di Bernardo D."/>
            <person name="Down T."/>
            <person name="Engstrom P."/>
            <person name="Fagiolini M."/>
            <person name="Faulkner G."/>
            <person name="Fletcher C.F."/>
            <person name="Fukushima T."/>
            <person name="Furuno M."/>
            <person name="Futaki S."/>
            <person name="Gariboldi M."/>
            <person name="Georgii-Hemming P."/>
            <person name="Gingeras T.R."/>
            <person name="Gojobori T."/>
            <person name="Green R.E."/>
            <person name="Gustincich S."/>
            <person name="Harbers M."/>
            <person name="Hayashi Y."/>
            <person name="Hensch T.K."/>
            <person name="Hirokawa N."/>
            <person name="Hill D."/>
            <person name="Huminiecki L."/>
            <person name="Iacono M."/>
            <person name="Ikeo K."/>
            <person name="Iwama A."/>
            <person name="Ishikawa T."/>
            <person name="Jakt M."/>
            <person name="Kanapin A."/>
            <person name="Katoh M."/>
            <person name="Kawasawa Y."/>
            <person name="Kelso J."/>
            <person name="Kitamura H."/>
            <person name="Kitano H."/>
            <person name="Kollias G."/>
            <person name="Krishnan S.P."/>
            <person name="Kruger A."/>
            <person name="Kummerfeld S.K."/>
            <person name="Kurochkin I.V."/>
            <person name="Lareau L.F."/>
            <person name="Lazarevic D."/>
            <person name="Lipovich L."/>
            <person name="Liu J."/>
            <person name="Liuni S."/>
            <person name="McWilliam S."/>
            <person name="Madan Babu M."/>
            <person name="Madera M."/>
            <person name="Marchionni L."/>
            <person name="Matsuda H."/>
            <person name="Matsuzawa S."/>
            <person name="Miki H."/>
            <person name="Mignone F."/>
            <person name="Miyake S."/>
            <person name="Morris K."/>
            <person name="Mottagui-Tabar S."/>
            <person name="Mulder N."/>
            <person name="Nakano N."/>
            <person name="Nakauchi H."/>
            <person name="Ng P."/>
            <person name="Nilsson R."/>
            <person name="Nishiguchi S."/>
            <person name="Nishikawa S."/>
            <person name="Nori F."/>
            <person name="Ohara O."/>
            <person name="Okazaki Y."/>
            <person name="Orlando V."/>
            <person name="Pang K.C."/>
            <person name="Pavan W.J."/>
            <person name="Pavesi G."/>
            <person name="Pesole G."/>
            <person name="Petrovsky N."/>
            <person name="Piazza S."/>
            <person name="Reed J."/>
            <person name="Reid J.F."/>
            <person name="Ring B.Z."/>
            <person name="Ringwald M."/>
            <person name="Rost B."/>
            <person name="Ruan Y."/>
            <person name="Salzberg S.L."/>
            <person name="Sandelin A."/>
            <person name="Schneider C."/>
            <person name="Schoenbach C."/>
            <person name="Sekiguchi K."/>
            <person name="Semple C.A."/>
            <person name="Seno S."/>
            <person name="Sessa L."/>
            <person name="Sheng Y."/>
            <person name="Shibata Y."/>
            <person name="Shimada H."/>
            <person name="Shimada K."/>
            <person name="Silva D."/>
            <person name="Sinclair B."/>
            <person name="Sperling S."/>
            <person name="Stupka E."/>
            <person name="Sugiura K."/>
            <person name="Sultana R."/>
            <person name="Takenaka Y."/>
            <person name="Taki K."/>
            <person name="Tammoja K."/>
            <person name="Tan S.L."/>
            <person name="Tang S."/>
            <person name="Taylor M.S."/>
            <person name="Tegner J."/>
            <person name="Teichmann S.A."/>
            <person name="Ueda H.R."/>
            <person name="van Nimwegen E."/>
            <person name="Verardo R."/>
            <person name="Wei C.L."/>
            <person name="Yagi K."/>
            <person name="Yamanishi H."/>
            <person name="Zabarovsky E."/>
            <person name="Zhu S."/>
            <person name="Zimmer A."/>
            <person name="Hide W."/>
            <person name="Bult C."/>
            <person name="Grimmond S.M."/>
            <person name="Teasdale R.D."/>
            <person name="Liu E.T."/>
            <person name="Brusic V."/>
            <person name="Quackenbush J."/>
            <person name="Wahlestedt C."/>
            <person name="Mattick J.S."/>
            <person name="Hume D.A."/>
            <person name="Kai C."/>
            <person name="Sasaki D."/>
            <person name="Tomaru Y."/>
            <person name="Fukuda S."/>
            <person name="Kanamori-Katayama M."/>
            <person name="Suzuki M."/>
            <person name="Aoki J."/>
            <person name="Arakawa T."/>
            <person name="Iida J."/>
            <person name="Imamura K."/>
            <person name="Itoh M."/>
            <person name="Kato T."/>
            <person name="Kawaji H."/>
            <person name="Kawagashira N."/>
            <person name="Kawashima T."/>
            <person name="Kojima M."/>
            <person name="Kondo S."/>
            <person name="Konno H."/>
            <person name="Nakano K."/>
            <person name="Ninomiya N."/>
            <person name="Nishio T."/>
            <person name="Okada M."/>
            <person name="Plessy C."/>
            <person name="Shibata K."/>
            <person name="Shiraki T."/>
            <person name="Suzuki S."/>
            <person name="Tagami M."/>
            <person name="Waki K."/>
            <person name="Watahiki A."/>
            <person name="Okamura-Oho Y."/>
            <person name="Suzuki H."/>
            <person name="Kawai J."/>
            <person name="Hayashizaki Y."/>
        </authorList>
    </citation>
    <scope>NUCLEOTIDE SEQUENCE [LARGE SCALE MRNA] (ISOFORMS 1 AND 3)</scope>
    <source>
        <strain evidence="16">C57BL/6J</strain>
        <tissue evidence="15">Embryo</tissue>
        <tissue evidence="16">Hypothalamus</tissue>
    </source>
</reference>
<reference evidence="12 13" key="3">
    <citation type="journal article" date="2004" name="Genome Res.">
        <title>The status, quality, and expansion of the NIH full-length cDNA project: the Mammalian Gene Collection (MGC).</title>
        <authorList>
            <consortium name="The MGC Project Team"/>
        </authorList>
    </citation>
    <scope>NUCLEOTIDE SEQUENCE [LARGE SCALE MRNA] (ISOFORM 3)</scope>
    <source>
        <strain evidence="13">C57BL/6J</strain>
        <tissue evidence="13">Brain</tissue>
    </source>
</reference>
<reference key="4">
    <citation type="journal article" date="2010" name="Cell">
        <title>A tissue-specific atlas of mouse protein phosphorylation and expression.</title>
        <authorList>
            <person name="Huttlin E.L."/>
            <person name="Jedrychowski M.P."/>
            <person name="Elias J.E."/>
            <person name="Goswami T."/>
            <person name="Rad R."/>
            <person name="Beausoleil S.A."/>
            <person name="Villen J."/>
            <person name="Haas W."/>
            <person name="Sowa M.E."/>
            <person name="Gygi S.P."/>
        </authorList>
    </citation>
    <scope>IDENTIFICATION BY MASS SPECTROMETRY [LARGE SCALE ANALYSIS]</scope>
    <source>
        <tissue>Brain</tissue>
        <tissue>Spleen</tissue>
        <tissue>Testis</tissue>
    </source>
</reference>
<proteinExistence type="evidence at protein level"/>